<organism>
    <name type="scientific">Xanthomonas campestris pv. campestris (strain ATCC 33913 / DSM 3586 / NCPPB 528 / LMG 568 / P 25)</name>
    <dbReference type="NCBI Taxonomy" id="190485"/>
    <lineage>
        <taxon>Bacteria</taxon>
        <taxon>Pseudomonadati</taxon>
        <taxon>Pseudomonadota</taxon>
        <taxon>Gammaproteobacteria</taxon>
        <taxon>Lysobacterales</taxon>
        <taxon>Lysobacteraceae</taxon>
        <taxon>Xanthomonas</taxon>
    </lineage>
</organism>
<name>RL20_XANCP</name>
<dbReference type="EMBL" id="AE008922">
    <property type="protein sequence ID" value="AAM41736.1"/>
    <property type="molecule type" value="Genomic_DNA"/>
</dbReference>
<dbReference type="RefSeq" id="NP_637812.1">
    <property type="nucleotide sequence ID" value="NC_003902.1"/>
</dbReference>
<dbReference type="RefSeq" id="WP_011037598.1">
    <property type="nucleotide sequence ID" value="NC_003902.1"/>
</dbReference>
<dbReference type="SMR" id="Q8P7Z4"/>
<dbReference type="STRING" id="190485.XCC2460"/>
<dbReference type="EnsemblBacteria" id="AAM41736">
    <property type="protein sequence ID" value="AAM41736"/>
    <property type="gene ID" value="XCC2460"/>
</dbReference>
<dbReference type="GeneID" id="58012947"/>
<dbReference type="KEGG" id="xcc:XCC2460"/>
<dbReference type="PATRIC" id="fig|190485.4.peg.2623"/>
<dbReference type="eggNOG" id="COG0292">
    <property type="taxonomic scope" value="Bacteria"/>
</dbReference>
<dbReference type="HOGENOM" id="CLU_123265_0_1_6"/>
<dbReference type="OrthoDB" id="9808966at2"/>
<dbReference type="Proteomes" id="UP000001010">
    <property type="component" value="Chromosome"/>
</dbReference>
<dbReference type="GO" id="GO:0022625">
    <property type="term" value="C:cytosolic large ribosomal subunit"/>
    <property type="evidence" value="ECO:0000318"/>
    <property type="project" value="GO_Central"/>
</dbReference>
<dbReference type="GO" id="GO:0019843">
    <property type="term" value="F:rRNA binding"/>
    <property type="evidence" value="ECO:0007669"/>
    <property type="project" value="UniProtKB-UniRule"/>
</dbReference>
<dbReference type="GO" id="GO:0003735">
    <property type="term" value="F:structural constituent of ribosome"/>
    <property type="evidence" value="ECO:0000318"/>
    <property type="project" value="GO_Central"/>
</dbReference>
<dbReference type="GO" id="GO:0000027">
    <property type="term" value="P:ribosomal large subunit assembly"/>
    <property type="evidence" value="ECO:0007669"/>
    <property type="project" value="UniProtKB-UniRule"/>
</dbReference>
<dbReference type="GO" id="GO:0006412">
    <property type="term" value="P:translation"/>
    <property type="evidence" value="ECO:0007669"/>
    <property type="project" value="InterPro"/>
</dbReference>
<dbReference type="CDD" id="cd07026">
    <property type="entry name" value="Ribosomal_L20"/>
    <property type="match status" value="1"/>
</dbReference>
<dbReference type="FunFam" id="1.10.1900.20:FF:000001">
    <property type="entry name" value="50S ribosomal protein L20"/>
    <property type="match status" value="1"/>
</dbReference>
<dbReference type="Gene3D" id="6.10.160.10">
    <property type="match status" value="1"/>
</dbReference>
<dbReference type="Gene3D" id="1.10.1900.20">
    <property type="entry name" value="Ribosomal protein L20"/>
    <property type="match status" value="1"/>
</dbReference>
<dbReference type="HAMAP" id="MF_00382">
    <property type="entry name" value="Ribosomal_bL20"/>
    <property type="match status" value="1"/>
</dbReference>
<dbReference type="InterPro" id="IPR005813">
    <property type="entry name" value="Ribosomal_bL20"/>
</dbReference>
<dbReference type="InterPro" id="IPR049946">
    <property type="entry name" value="RIBOSOMAL_L20_CS"/>
</dbReference>
<dbReference type="InterPro" id="IPR035566">
    <property type="entry name" value="Ribosomal_protein_bL20_C"/>
</dbReference>
<dbReference type="NCBIfam" id="TIGR01032">
    <property type="entry name" value="rplT_bact"/>
    <property type="match status" value="1"/>
</dbReference>
<dbReference type="PANTHER" id="PTHR10986">
    <property type="entry name" value="39S RIBOSOMAL PROTEIN L20"/>
    <property type="match status" value="1"/>
</dbReference>
<dbReference type="Pfam" id="PF00453">
    <property type="entry name" value="Ribosomal_L20"/>
    <property type="match status" value="1"/>
</dbReference>
<dbReference type="PRINTS" id="PR00062">
    <property type="entry name" value="RIBOSOMALL20"/>
</dbReference>
<dbReference type="SUPFAM" id="SSF74731">
    <property type="entry name" value="Ribosomal protein L20"/>
    <property type="match status" value="1"/>
</dbReference>
<dbReference type="PROSITE" id="PS00937">
    <property type="entry name" value="RIBOSOMAL_L20"/>
    <property type="match status" value="1"/>
</dbReference>
<keyword id="KW-1185">Reference proteome</keyword>
<keyword id="KW-0687">Ribonucleoprotein</keyword>
<keyword id="KW-0689">Ribosomal protein</keyword>
<keyword id="KW-0694">RNA-binding</keyword>
<keyword id="KW-0699">rRNA-binding</keyword>
<proteinExistence type="inferred from homology"/>
<protein>
    <recommendedName>
        <fullName evidence="1">Large ribosomal subunit protein bL20</fullName>
    </recommendedName>
    <alternativeName>
        <fullName evidence="2">50S ribosomal protein L20</fullName>
    </alternativeName>
</protein>
<evidence type="ECO:0000255" key="1">
    <source>
        <dbReference type="HAMAP-Rule" id="MF_00382"/>
    </source>
</evidence>
<evidence type="ECO:0000305" key="2"/>
<sequence length="119" mass="13373">MARVKRGVQARRRHKKILTLAKGYYNARRKVFRVAKQAVIKAQQYAYIGRKQKKRNFRSLWITRINAAARINGLSYSRFMNGMLKAGITLDRKVLADIAVHDAAGFAALAEKAKGALAA</sequence>
<reference key="1">
    <citation type="journal article" date="2002" name="Nature">
        <title>Comparison of the genomes of two Xanthomonas pathogens with differing host specificities.</title>
        <authorList>
            <person name="da Silva A.C.R."/>
            <person name="Ferro J.A."/>
            <person name="Reinach F.C."/>
            <person name="Farah C.S."/>
            <person name="Furlan L.R."/>
            <person name="Quaggio R.B."/>
            <person name="Monteiro-Vitorello C.B."/>
            <person name="Van Sluys M.A."/>
            <person name="Almeida N.F. Jr."/>
            <person name="Alves L.M.C."/>
            <person name="do Amaral A.M."/>
            <person name="Bertolini M.C."/>
            <person name="Camargo L.E.A."/>
            <person name="Camarotte G."/>
            <person name="Cannavan F."/>
            <person name="Cardozo J."/>
            <person name="Chambergo F."/>
            <person name="Ciapina L.P."/>
            <person name="Cicarelli R.M.B."/>
            <person name="Coutinho L.L."/>
            <person name="Cursino-Santos J.R."/>
            <person name="El-Dorry H."/>
            <person name="Faria J.B."/>
            <person name="Ferreira A.J.S."/>
            <person name="Ferreira R.C.C."/>
            <person name="Ferro M.I.T."/>
            <person name="Formighieri E.F."/>
            <person name="Franco M.C."/>
            <person name="Greggio C.C."/>
            <person name="Gruber A."/>
            <person name="Katsuyama A.M."/>
            <person name="Kishi L.T."/>
            <person name="Leite R.P."/>
            <person name="Lemos E.G.M."/>
            <person name="Lemos M.V.F."/>
            <person name="Locali E.C."/>
            <person name="Machado M.A."/>
            <person name="Madeira A.M.B.N."/>
            <person name="Martinez-Rossi N.M."/>
            <person name="Martins E.C."/>
            <person name="Meidanis J."/>
            <person name="Menck C.F.M."/>
            <person name="Miyaki C.Y."/>
            <person name="Moon D.H."/>
            <person name="Moreira L.M."/>
            <person name="Novo M.T.M."/>
            <person name="Okura V.K."/>
            <person name="Oliveira M.C."/>
            <person name="Oliveira V.R."/>
            <person name="Pereira H.A."/>
            <person name="Rossi A."/>
            <person name="Sena J.A.D."/>
            <person name="Silva C."/>
            <person name="de Souza R.F."/>
            <person name="Spinola L.A.F."/>
            <person name="Takita M.A."/>
            <person name="Tamura R.E."/>
            <person name="Teixeira E.C."/>
            <person name="Tezza R.I.D."/>
            <person name="Trindade dos Santos M."/>
            <person name="Truffi D."/>
            <person name="Tsai S.M."/>
            <person name="White F.F."/>
            <person name="Setubal J.C."/>
            <person name="Kitajima J.P."/>
        </authorList>
    </citation>
    <scope>NUCLEOTIDE SEQUENCE [LARGE SCALE GENOMIC DNA]</scope>
    <source>
        <strain>ATCC 33913 / DSM 3586 / NCPPB 528 / LMG 568 / P 25</strain>
    </source>
</reference>
<feature type="chain" id="PRO_0000177268" description="Large ribosomal subunit protein bL20">
    <location>
        <begin position="1"/>
        <end position="119"/>
    </location>
</feature>
<gene>
    <name evidence="1" type="primary">rplT</name>
    <name type="ordered locus">XCC2460</name>
</gene>
<comment type="function">
    <text evidence="1">Binds directly to 23S ribosomal RNA and is necessary for the in vitro assembly process of the 50S ribosomal subunit. It is not involved in the protein synthesizing functions of that subunit.</text>
</comment>
<comment type="similarity">
    <text evidence="1">Belongs to the bacterial ribosomal protein bL20 family.</text>
</comment>
<accession>Q8P7Z4</accession>